<keyword id="KW-0012">Acyltransferase</keyword>
<keyword id="KW-0903">Direct protein sequencing</keyword>
<keyword id="KW-0808">Transferase</keyword>
<protein>
    <recommendedName>
        <fullName>Pelargonidin 3-O-(6-caffeoylglucoside) 5-O-(6-O-malonylglucoside) 4'''-malonyltransferase</fullName>
        <ecNumber>2.3.1.214</ecNumber>
    </recommendedName>
    <alternativeName>
        <fullName>Anthocyanin 5-O-glucoside-4'''-O-malonyltransferase 2</fullName>
        <shortName>Ss5MaT2</shortName>
    </alternativeName>
</protein>
<feature type="chain" id="PRO_0000422579" description="Pelargonidin 3-O-(6-caffeoylglucoside) 5-O-(6-O-malonylglucoside) 4'''-malonyltransferase">
    <location>
        <begin position="1"/>
        <end position="417"/>
    </location>
</feature>
<feature type="active site" description="Proton acceptor" evidence="1">
    <location>
        <position position="147"/>
    </location>
</feature>
<feature type="active site" description="Proton acceptor" evidence="2">
    <location>
        <position position="360"/>
    </location>
</feature>
<sequence>MNINQINTKLIKPITPTPQNLKNYHISFLDQHVVKKYIAVVLYYQSAPDNGRLEDSLAETLVHFYPLAGRYIKTDLTVDCSDQGAEFIEAEARGDVRVTDLIGKTDTIHLCPEQYFGLDEGVDDPLLSIQVTRFSCGGATIAVSVSHRVFDVSSLETFLSAWSSASKTGGGVAPVIPSFALASLLPNKDEKFGLDSNKCQGKEQKIAVKRLLFEKRALTRLTSERTSGVRAACAVIAKALIRLDRTTHGKSRDFVVFQPINMRGRTGVPSPKNACGNMSFGSFTRRVSAKEEVGIGELVGLIGDGVRRGIAEYTEILCPDRDGRDVIIHVRNKNIKEVFKSETFVVSFTDWSKFGFYEVDFGWGRPIWSGVGPQRPRGNQTIMMRSKEGDGIEAWVHLNEDDMDLFEQDVEIKLFLS</sequence>
<name>5MAT2_SALSN</name>
<evidence type="ECO:0000250" key="1"/>
<evidence type="ECO:0000255" key="2"/>
<evidence type="ECO:0000269" key="3">
    <source>
    </source>
</evidence>
<evidence type="ECO:0000305" key="4"/>
<accession>Q6TXD2</accession>
<organism>
    <name type="scientific">Salvia splendens</name>
    <name type="common">Scarlet sage</name>
    <dbReference type="NCBI Taxonomy" id="180675"/>
    <lineage>
        <taxon>Eukaryota</taxon>
        <taxon>Viridiplantae</taxon>
        <taxon>Streptophyta</taxon>
        <taxon>Embryophyta</taxon>
        <taxon>Tracheophyta</taxon>
        <taxon>Spermatophyta</taxon>
        <taxon>Magnoliopsida</taxon>
        <taxon>eudicotyledons</taxon>
        <taxon>Gunneridae</taxon>
        <taxon>Pentapetalae</taxon>
        <taxon>asterids</taxon>
        <taxon>lamiids</taxon>
        <taxon>Lamiales</taxon>
        <taxon>Lamiaceae</taxon>
        <taxon>Nepetoideae</taxon>
        <taxon>Mentheae</taxon>
        <taxon>Salviinae</taxon>
        <taxon>Salvia</taxon>
        <taxon>Salvia subgen. Calosphace</taxon>
        <taxon>core Calosphace</taxon>
    </lineage>
</organism>
<comment type="function">
    <text evidence="3">Catalyzes the transfer of the malonyl group from malonyl-CoA to the 4'''-hydroxyl group of the 5-glucosyl moiety of anthocyanins. Anthocyanins are ubiquitous colored pigments that are responsible for petal color.</text>
</comment>
<comment type="catalytic activity">
    <reaction evidence="3">
        <text>4'''-demalonylsalvianin + malonyl-CoA = salvianin + CoA</text>
        <dbReference type="Rhea" id="RHEA:35515"/>
        <dbReference type="ChEBI" id="CHEBI:57287"/>
        <dbReference type="ChEBI" id="CHEBI:57384"/>
        <dbReference type="ChEBI" id="CHEBI:58638"/>
        <dbReference type="ChEBI" id="CHEBI:71606"/>
        <dbReference type="EC" id="2.3.1.214"/>
    </reaction>
</comment>
<comment type="activity regulation">
    <text evidence="3">Inhibited by the following metal ions: Cd(2+), Cu(2+), Fe(2+), Hg(2+) and Zn(2+). Activity is strongly inhibited by CoA-SH and partially inhibited by acetyl-CoA, caffeic acid and bisdemalonylsalvianin.</text>
</comment>
<comment type="biophysicochemical properties">
    <kinetics>
        <KM evidence="3">6.9 uM for malonyl-CoA (with native enzyme)</KM>
        <KM evidence="3">4.6 uM for malonyl-CoA (with recombinant enzyme)</KM>
        <KM evidence="3">51.3 uM for demalonylsalvianin (with native enzyme)</KM>
        <KM evidence="3">56.3 uM for demalonylsalvianin (with recombinant enzyme)</KM>
        <text>kcat is 0.55 sec(-1) (with native enzyme). kcat is 0.76 sec(-1) (with recombinant enzyme).</text>
    </kinetics>
</comment>
<comment type="pathway">
    <text evidence="3">Pigment biosynthesis; anthocyanin biosynthesis.</text>
</comment>
<comment type="subunit">
    <text evidence="3">Monomer.</text>
</comment>
<comment type="tissue specificity">
    <text evidence="3">Expressed at higher level in recently opened, fully pigmented flowers.</text>
</comment>
<comment type="similarity">
    <text evidence="4">Belongs to the plant acyltransferase family.</text>
</comment>
<reference key="1">
    <citation type="journal article" date="2004" name="Plant J.">
        <title>Identification and characterization of a novel anthocyanin malonyltransferase from scarlet sage (Salvia splendens) flowers: an enzyme that is phylogenetically separated from other anthocyanin acyltransferases.</title>
        <authorList>
            <person name="Suzuki H."/>
            <person name="Sawada S."/>
            <person name="Watanabe K."/>
            <person name="Nagae S."/>
            <person name="Yamaguchi M.A."/>
            <person name="Nakayama T."/>
            <person name="Nishino T."/>
        </authorList>
    </citation>
    <scope>NUCLEOTIDE SEQUENCE [MRNA]</scope>
    <scope>PROTEIN SEQUENCE OF 23-35 AND 388-400</scope>
    <scope>FUNCTION</scope>
    <scope>CATALYTIC ACTIVITY</scope>
    <scope>PATHWAY</scope>
    <scope>SUBUNIT</scope>
    <scope>BIOPHYSICOCHEMICAL PROPERTIES</scope>
    <scope>ACTIVITY REGULATION</scope>
    <scope>TISSUE SPECIFICITY</scope>
</reference>
<dbReference type="EC" id="2.3.1.214"/>
<dbReference type="EMBL" id="AY383734">
    <property type="protein sequence ID" value="AAR26385.1"/>
    <property type="molecule type" value="mRNA"/>
</dbReference>
<dbReference type="SMR" id="Q6TXD2"/>
<dbReference type="KEGG" id="ag:AAR26385"/>
<dbReference type="BRENDA" id="2.3.1.214">
    <property type="organism ID" value="7433"/>
</dbReference>
<dbReference type="BRENDA" id="2.3.1.224">
    <property type="organism ID" value="7433"/>
</dbReference>
<dbReference type="SABIO-RK" id="Q6TXD2"/>
<dbReference type="UniPathway" id="UPA00009"/>
<dbReference type="GO" id="GO:0016747">
    <property type="term" value="F:acyltransferase activity, transferring groups other than amino-acyl groups"/>
    <property type="evidence" value="ECO:0000314"/>
    <property type="project" value="UniProtKB"/>
</dbReference>
<dbReference type="GO" id="GO:0102801">
    <property type="term" value="F:anthocyanin 5-O-glucoside-4'''-O-malonyltransferase activity"/>
    <property type="evidence" value="ECO:0007669"/>
    <property type="project" value="UniProtKB-EC"/>
</dbReference>
<dbReference type="GO" id="GO:0009718">
    <property type="term" value="P:anthocyanin-containing compound biosynthetic process"/>
    <property type="evidence" value="ECO:0000314"/>
    <property type="project" value="UniProtKB"/>
</dbReference>
<dbReference type="GO" id="GO:0043473">
    <property type="term" value="P:pigmentation"/>
    <property type="evidence" value="ECO:0000314"/>
    <property type="project" value="UniProtKB"/>
</dbReference>
<dbReference type="Gene3D" id="3.30.559.10">
    <property type="entry name" value="Chloramphenicol acetyltransferase-like domain"/>
    <property type="match status" value="2"/>
</dbReference>
<dbReference type="InterPro" id="IPR023213">
    <property type="entry name" value="CAT-like_dom_sf"/>
</dbReference>
<dbReference type="PANTHER" id="PTHR31623">
    <property type="entry name" value="F21J9.9"/>
    <property type="match status" value="1"/>
</dbReference>
<dbReference type="PANTHER" id="PTHR31623:SF70">
    <property type="entry name" value="TRANSFERASE, CHLORAMPHENICOL ACETYLTRANSFERASE-LIKE DOMAIN PROTEIN"/>
    <property type="match status" value="1"/>
</dbReference>
<dbReference type="Pfam" id="PF02458">
    <property type="entry name" value="Transferase"/>
    <property type="match status" value="1"/>
</dbReference>
<proteinExistence type="evidence at protein level"/>